<accession>Q9C0D7</accession>
<accession>B4DI65</accession>
<accession>B4DR47</accession>
<sequence length="883" mass="99340">MPGGGSQEYGVLCIQEYRKNSKVESSTRNNFMGLKDHLGHDLGHLYVESTDPQLSPAVPWSTVENPSMDTVNVGKDEKEASEENASSGDSEENTNSDHESEQLGSISVEPGLITKTHRQLCRSPCLEPHILKRNEILQDFKPEESQTTSKEAKKPPDVVREYQTKLEFALKLGYSEEQVQLVLNKLGTDALINDILGELVKLGNKSEADQTVSTINTITRETSSLESQRSESPMQEIVTDDGENLRPIVIDGSNVAMSHGNKEVFSCRGIKLAVDWFLERGHKDITVFVPAWRKEQSRPDALITDQEILRKLEKEKILVFTPSRRVQGRRVVCYDDRFIVKLAFESDGIIVSNDNYRDLANEKPEWKKFIDERLLMYSFVNDKFMPPDDPLGRHGPSLDNFLRKKPIVPEHKKQPCPYGKKCTYGHKCKYYHPERGSQPQRSVADELRAMSRNTAAKTANEGGLVKSNSVPCSTKADSTSDVKRGAPKRQSDPSIRTQVYQDLEEKLPTKNKLETRSVPSLVSIPATSTAKPQSTTSLSNGLPSGVHFPPQDQRPQGQYPSMMMATKNHGTPMPYEQYPKCDSPVDIGYYSMLNAYSNLSLSGPRSPERRFSLDTDYRISSVASDCSSEGSMSCGSSDSYVGYNDRSYVSSPDPQLEENLKCQHMHPHSRLNPQPFLQNFHDPLTRGQSYSHEEPKFHHKPPLPHLALHLPHSAVGARSSCPGDYPSPPSSAHSKAPHLGRSLVATRIDSISDSRLYDSSPSRQRKPYSRQEGLGSWERPGYGIDAYGYRQTYSLPDNSTQPCYEQFTFQSLPEQQEPAWRIPYCGMPQDPPRYQDNREKIYINLCNIFPPDLVRIVMKRNPHMTDAQQLAAAILVEKSQLGY</sequence>
<keyword id="KW-0025">Alternative splicing</keyword>
<keyword id="KW-0255">Endonuclease</keyword>
<keyword id="KW-0378">Hydrolase</keyword>
<keyword id="KW-0460">Magnesium</keyword>
<keyword id="KW-0479">Metal-binding</keyword>
<keyword id="KW-0540">Nuclease</keyword>
<keyword id="KW-0597">Phosphoprotein</keyword>
<keyword id="KW-1267">Proteomics identification</keyword>
<keyword id="KW-1185">Reference proteome</keyword>
<keyword id="KW-0862">Zinc</keyword>
<keyword id="KW-0863">Zinc-finger</keyword>
<proteinExistence type="evidence at protein level"/>
<evidence type="ECO:0000255" key="1"/>
<evidence type="ECO:0000255" key="2">
    <source>
        <dbReference type="PROSITE-ProRule" id="PRU00723"/>
    </source>
</evidence>
<evidence type="ECO:0000256" key="3">
    <source>
        <dbReference type="SAM" id="MobiDB-lite"/>
    </source>
</evidence>
<evidence type="ECO:0000269" key="4">
    <source>
    </source>
</evidence>
<evidence type="ECO:0000303" key="5">
    <source>
    </source>
</evidence>
<evidence type="ECO:0000305" key="6"/>
<evidence type="ECO:0007744" key="7">
    <source>
    </source>
</evidence>
<dbReference type="EC" id="3.1.-.-"/>
<dbReference type="EMBL" id="AK295437">
    <property type="protein sequence ID" value="BAG58377.1"/>
    <property type="molecule type" value="mRNA"/>
</dbReference>
<dbReference type="EMBL" id="AK299100">
    <property type="protein sequence ID" value="BAG61159.1"/>
    <property type="molecule type" value="mRNA"/>
</dbReference>
<dbReference type="EMBL" id="AP000901">
    <property type="status" value="NOT_ANNOTATED_CDS"/>
    <property type="molecule type" value="Genomic_DNA"/>
</dbReference>
<dbReference type="EMBL" id="AP001889">
    <property type="status" value="NOT_ANNOTATED_CDS"/>
    <property type="molecule type" value="Genomic_DNA"/>
</dbReference>
<dbReference type="EMBL" id="AB051513">
    <property type="protein sequence ID" value="BAB21817.1"/>
    <property type="molecule type" value="mRNA"/>
</dbReference>
<dbReference type="CCDS" id="CCDS44727.1">
    <molecule id="Q9C0D7-1"/>
</dbReference>
<dbReference type="CCDS" id="CCDS91583.1">
    <molecule id="Q9C0D7-2"/>
</dbReference>
<dbReference type="RefSeq" id="NP_001397966.1">
    <molecule id="Q9C0D7-2"/>
    <property type="nucleotide sequence ID" value="NM_001411037.1"/>
</dbReference>
<dbReference type="RefSeq" id="NP_203748.1">
    <molecule id="Q9C0D7-1"/>
    <property type="nucleotide sequence ID" value="NM_033390.2"/>
</dbReference>
<dbReference type="RefSeq" id="XP_016873966.1">
    <property type="nucleotide sequence ID" value="XM_017018477.1"/>
</dbReference>
<dbReference type="SMR" id="Q9C0D7"/>
<dbReference type="BioGRID" id="124547">
    <property type="interactions" value="11"/>
</dbReference>
<dbReference type="FunCoup" id="Q9C0D7">
    <property type="interactions" value="140"/>
</dbReference>
<dbReference type="IntAct" id="Q9C0D7">
    <property type="interactions" value="5"/>
</dbReference>
<dbReference type="STRING" id="9606.ENSP00000278590"/>
<dbReference type="GlyCosmos" id="Q9C0D7">
    <property type="glycosylation" value="1 site, 1 glycan"/>
</dbReference>
<dbReference type="GlyGen" id="Q9C0D7">
    <property type="glycosylation" value="1 site, 1 O-linked glycan (1 site)"/>
</dbReference>
<dbReference type="iPTMnet" id="Q9C0D7"/>
<dbReference type="PhosphoSitePlus" id="Q9C0D7"/>
<dbReference type="BioMuta" id="ZC3H12C"/>
<dbReference type="DMDM" id="190485746"/>
<dbReference type="jPOST" id="Q9C0D7"/>
<dbReference type="MassIVE" id="Q9C0D7"/>
<dbReference type="PaxDb" id="9606-ENSP00000278590"/>
<dbReference type="PeptideAtlas" id="Q9C0D7"/>
<dbReference type="ProteomicsDB" id="4923"/>
<dbReference type="ProteomicsDB" id="80017">
    <molecule id="Q9C0D7-1"/>
</dbReference>
<dbReference type="Pumba" id="Q9C0D7"/>
<dbReference type="Antibodypedia" id="45577">
    <property type="antibodies" value="50 antibodies from 23 providers"/>
</dbReference>
<dbReference type="DNASU" id="85463"/>
<dbReference type="Ensembl" id="ENST00000278590.8">
    <molecule id="Q9C0D7-1"/>
    <property type="protein sequence ID" value="ENSP00000278590.3"/>
    <property type="gene ID" value="ENSG00000149289.11"/>
</dbReference>
<dbReference type="Ensembl" id="ENST00000528673.5">
    <molecule id="Q9C0D7-2"/>
    <property type="protein sequence ID" value="ENSP00000431821.1"/>
    <property type="gene ID" value="ENSG00000149289.11"/>
</dbReference>
<dbReference type="GeneID" id="85463"/>
<dbReference type="KEGG" id="hsa:85463"/>
<dbReference type="MANE-Select" id="ENST00000278590.8">
    <property type="protein sequence ID" value="ENSP00000278590.3"/>
    <property type="RefSeq nucleotide sequence ID" value="NM_033390.2"/>
    <property type="RefSeq protein sequence ID" value="NP_203748.1"/>
</dbReference>
<dbReference type="UCSC" id="uc009yxw.3">
    <molecule id="Q9C0D7-1"/>
    <property type="organism name" value="human"/>
</dbReference>
<dbReference type="AGR" id="HGNC:29362"/>
<dbReference type="CTD" id="85463"/>
<dbReference type="DisGeNET" id="85463"/>
<dbReference type="GeneCards" id="ZC3H12C"/>
<dbReference type="HGNC" id="HGNC:29362">
    <property type="gene designation" value="ZC3H12C"/>
</dbReference>
<dbReference type="HPA" id="ENSG00000149289">
    <property type="expression patterns" value="Low tissue specificity"/>
</dbReference>
<dbReference type="MIM" id="615001">
    <property type="type" value="gene"/>
</dbReference>
<dbReference type="neXtProt" id="NX_Q9C0D7"/>
<dbReference type="OpenTargets" id="ENSG00000149289"/>
<dbReference type="PharmGKB" id="PA128394739"/>
<dbReference type="VEuPathDB" id="HostDB:ENSG00000149289"/>
<dbReference type="eggNOG" id="KOG3777">
    <property type="taxonomic scope" value="Eukaryota"/>
</dbReference>
<dbReference type="GeneTree" id="ENSGT00940000158397"/>
<dbReference type="InParanoid" id="Q9C0D7"/>
<dbReference type="OMA" id="RSPDCRY"/>
<dbReference type="OrthoDB" id="392925at2759"/>
<dbReference type="PAN-GO" id="Q9C0D7">
    <property type="GO annotations" value="5 GO annotations based on evolutionary models"/>
</dbReference>
<dbReference type="PhylomeDB" id="Q9C0D7"/>
<dbReference type="TreeFam" id="TF315783"/>
<dbReference type="PathwayCommons" id="Q9C0D7"/>
<dbReference type="SignaLink" id="Q9C0D7"/>
<dbReference type="BioGRID-ORCS" id="85463">
    <property type="hits" value="8 hits in 1145 CRISPR screens"/>
</dbReference>
<dbReference type="ChiTaRS" id="ZC3H12C">
    <property type="organism name" value="human"/>
</dbReference>
<dbReference type="GenomeRNAi" id="85463"/>
<dbReference type="Pharos" id="Q9C0D7">
    <property type="development level" value="Tbio"/>
</dbReference>
<dbReference type="PRO" id="PR:Q9C0D7"/>
<dbReference type="Proteomes" id="UP000005640">
    <property type="component" value="Chromosome 11"/>
</dbReference>
<dbReference type="RNAct" id="Q9C0D7">
    <property type="molecule type" value="protein"/>
</dbReference>
<dbReference type="Bgee" id="ENSG00000149289">
    <property type="expression patterns" value="Expressed in tibialis anterior and 180 other cell types or tissues"/>
</dbReference>
<dbReference type="ExpressionAtlas" id="Q9C0D7">
    <property type="expression patterns" value="baseline and differential"/>
</dbReference>
<dbReference type="GO" id="GO:0036464">
    <property type="term" value="C:cytoplasmic ribonucleoprotein granule"/>
    <property type="evidence" value="ECO:0000318"/>
    <property type="project" value="GO_Central"/>
</dbReference>
<dbReference type="GO" id="GO:0005634">
    <property type="term" value="C:nucleus"/>
    <property type="evidence" value="ECO:0000318"/>
    <property type="project" value="GO_Central"/>
</dbReference>
<dbReference type="GO" id="GO:0003729">
    <property type="term" value="F:mRNA binding"/>
    <property type="evidence" value="ECO:0000318"/>
    <property type="project" value="GO_Central"/>
</dbReference>
<dbReference type="GO" id="GO:0004521">
    <property type="term" value="F:RNA endonuclease activity"/>
    <property type="evidence" value="ECO:0000318"/>
    <property type="project" value="GO_Central"/>
</dbReference>
<dbReference type="GO" id="GO:0008270">
    <property type="term" value="F:zinc ion binding"/>
    <property type="evidence" value="ECO:0007669"/>
    <property type="project" value="UniProtKB-KW"/>
</dbReference>
<dbReference type="CDD" id="cd18729">
    <property type="entry name" value="PIN_Zc3h12-like"/>
    <property type="match status" value="1"/>
</dbReference>
<dbReference type="FunFam" id="3.40.50.11980:FF:000001">
    <property type="entry name" value="ZC3H12A isoform 1"/>
    <property type="match status" value="1"/>
</dbReference>
<dbReference type="Gene3D" id="3.40.50.11980">
    <property type="match status" value="1"/>
</dbReference>
<dbReference type="InterPro" id="IPR040546">
    <property type="entry name" value="Rege-1_UBA-like"/>
</dbReference>
<dbReference type="InterPro" id="IPR040757">
    <property type="entry name" value="Regnase_1/ZC3H12_C"/>
</dbReference>
<dbReference type="InterPro" id="IPR021869">
    <property type="entry name" value="RNase_Zc3h12_NYN"/>
</dbReference>
<dbReference type="InterPro" id="IPR051101">
    <property type="entry name" value="ZC3H12/N4BP1_RNase_Reg"/>
</dbReference>
<dbReference type="InterPro" id="IPR000571">
    <property type="entry name" value="Znf_CCCH"/>
</dbReference>
<dbReference type="PANTHER" id="PTHR12876">
    <property type="entry name" value="N4BP1-RELATED"/>
    <property type="match status" value="1"/>
</dbReference>
<dbReference type="PANTHER" id="PTHR12876:SF36">
    <property type="entry name" value="RIBONUCLEASE ZC3H12C-RELATED"/>
    <property type="match status" value="1"/>
</dbReference>
<dbReference type="Pfam" id="PF18561">
    <property type="entry name" value="Regnase_1_C"/>
    <property type="match status" value="1"/>
</dbReference>
<dbReference type="Pfam" id="PF11977">
    <property type="entry name" value="RNase_Zc3h12a"/>
    <property type="match status" value="1"/>
</dbReference>
<dbReference type="Pfam" id="PF18039">
    <property type="entry name" value="UBA_6"/>
    <property type="match status" value="1"/>
</dbReference>
<dbReference type="PROSITE" id="PS50103">
    <property type="entry name" value="ZF_C3H1"/>
    <property type="match status" value="1"/>
</dbReference>
<gene>
    <name type="primary">ZC3H12C</name>
    <name type="synonym">KIAA1726</name>
    <name type="synonym">MCPIP3</name>
</gene>
<name>ZC12C_HUMAN</name>
<feature type="chain" id="PRO_0000337843" description="Probable ribonuclease ZC3H12C">
    <location>
        <begin position="1"/>
        <end position="883"/>
    </location>
</feature>
<feature type="domain" description="RNase NYN" evidence="1">
    <location>
        <begin position="245"/>
        <end position="400"/>
    </location>
</feature>
<feature type="zinc finger region" description="C3H1-type" evidence="2">
    <location>
        <begin position="410"/>
        <end position="435"/>
    </location>
</feature>
<feature type="region of interest" description="Disordered" evidence="3">
    <location>
        <begin position="53"/>
        <end position="109"/>
    </location>
</feature>
<feature type="region of interest" description="Disordered" evidence="3">
    <location>
        <begin position="139"/>
        <end position="158"/>
    </location>
</feature>
<feature type="region of interest" description="Disordered" evidence="3">
    <location>
        <begin position="456"/>
        <end position="551"/>
    </location>
</feature>
<feature type="region of interest" description="Disordered" evidence="3">
    <location>
        <begin position="680"/>
        <end position="738"/>
    </location>
</feature>
<feature type="region of interest" description="Disordered" evidence="3">
    <location>
        <begin position="754"/>
        <end position="775"/>
    </location>
</feature>
<feature type="compositionally biased region" description="Polar residues" evidence="3">
    <location>
        <begin position="466"/>
        <end position="477"/>
    </location>
</feature>
<feature type="compositionally biased region" description="Basic and acidic residues" evidence="3">
    <location>
        <begin position="503"/>
        <end position="515"/>
    </location>
</feature>
<feature type="compositionally biased region" description="Polar residues" evidence="3">
    <location>
        <begin position="517"/>
        <end position="542"/>
    </location>
</feature>
<feature type="compositionally biased region" description="Low complexity" evidence="3">
    <location>
        <begin position="705"/>
        <end position="714"/>
    </location>
</feature>
<feature type="modified residue" description="Phosphoserine" evidence="7">
    <location>
        <position position="230"/>
    </location>
</feature>
<feature type="splice variant" id="VSP_054127" description="In isoform 2." evidence="5">
    <original>MPGGGSQ</original>
    <variation>MSLYFPAN</variation>
    <location>
        <begin position="1"/>
        <end position="7"/>
    </location>
</feature>
<feature type="sequence conflict" description="In Ref. 1; BAG58377." evidence="6" ref="1">
    <original>D</original>
    <variation>G</variation>
    <location>
        <position position="69"/>
    </location>
</feature>
<feature type="sequence conflict" description="In Ref. 1; BAG58377." evidence="6" ref="1">
    <original>P</original>
    <variation>A</variation>
    <location>
        <position position="574"/>
    </location>
</feature>
<comment type="function">
    <text evidence="6">May function as RNase and regulate the levels of target RNA species.</text>
</comment>
<comment type="cofactor">
    <cofactor evidence="6">
        <name>Mg(2+)</name>
        <dbReference type="ChEBI" id="CHEBI:18420"/>
    </cofactor>
</comment>
<comment type="interaction">
    <interactant intactId="EBI-2857430">
        <id>Q9C0D7</id>
    </interactant>
    <interactant intactId="EBI-3650647">
        <id>Q9BUZ4</id>
        <label>TRAF4</label>
    </interactant>
    <organismsDiffer>false</organismsDiffer>
    <experiments>3</experiments>
</comment>
<comment type="alternative products">
    <event type="alternative splicing"/>
    <isoform>
        <id>Q9C0D7-1</id>
        <name>1</name>
        <sequence type="displayed"/>
    </isoform>
    <isoform>
        <id>Q9C0D7-2</id>
        <name>2</name>
        <sequence type="described" ref="VSP_054127"/>
    </isoform>
</comment>
<comment type="induction">
    <text evidence="4">By cytokines (TNF-alpha and interleukin-1) in acute monocytic leukemia cell line THP-1 cells.</text>
</comment>
<comment type="similarity">
    <text evidence="6">Belongs to the ZC3H12 family.</text>
</comment>
<organism>
    <name type="scientific">Homo sapiens</name>
    <name type="common">Human</name>
    <dbReference type="NCBI Taxonomy" id="9606"/>
    <lineage>
        <taxon>Eukaryota</taxon>
        <taxon>Metazoa</taxon>
        <taxon>Chordata</taxon>
        <taxon>Craniata</taxon>
        <taxon>Vertebrata</taxon>
        <taxon>Euteleostomi</taxon>
        <taxon>Mammalia</taxon>
        <taxon>Eutheria</taxon>
        <taxon>Euarchontoglires</taxon>
        <taxon>Primates</taxon>
        <taxon>Haplorrhini</taxon>
        <taxon>Catarrhini</taxon>
        <taxon>Hominidae</taxon>
        <taxon>Homo</taxon>
    </lineage>
</organism>
<protein>
    <recommendedName>
        <fullName>Probable ribonuclease ZC3H12C</fullName>
        <ecNumber>3.1.-.-</ecNumber>
    </recommendedName>
    <alternativeName>
        <fullName>MCP-induced protein 3</fullName>
    </alternativeName>
    <alternativeName>
        <fullName>Zinc finger CCCH domain-containing protein 12C</fullName>
    </alternativeName>
</protein>
<reference key="1">
    <citation type="journal article" date="2004" name="Nat. Genet.">
        <title>Complete sequencing and characterization of 21,243 full-length human cDNAs.</title>
        <authorList>
            <person name="Ota T."/>
            <person name="Suzuki Y."/>
            <person name="Nishikawa T."/>
            <person name="Otsuki T."/>
            <person name="Sugiyama T."/>
            <person name="Irie R."/>
            <person name="Wakamatsu A."/>
            <person name="Hayashi K."/>
            <person name="Sato H."/>
            <person name="Nagai K."/>
            <person name="Kimura K."/>
            <person name="Makita H."/>
            <person name="Sekine M."/>
            <person name="Obayashi M."/>
            <person name="Nishi T."/>
            <person name="Shibahara T."/>
            <person name="Tanaka T."/>
            <person name="Ishii S."/>
            <person name="Yamamoto J."/>
            <person name="Saito K."/>
            <person name="Kawai Y."/>
            <person name="Isono Y."/>
            <person name="Nakamura Y."/>
            <person name="Nagahari K."/>
            <person name="Murakami K."/>
            <person name="Yasuda T."/>
            <person name="Iwayanagi T."/>
            <person name="Wagatsuma M."/>
            <person name="Shiratori A."/>
            <person name="Sudo H."/>
            <person name="Hosoiri T."/>
            <person name="Kaku Y."/>
            <person name="Kodaira H."/>
            <person name="Kondo H."/>
            <person name="Sugawara M."/>
            <person name="Takahashi M."/>
            <person name="Kanda K."/>
            <person name="Yokoi T."/>
            <person name="Furuya T."/>
            <person name="Kikkawa E."/>
            <person name="Omura Y."/>
            <person name="Abe K."/>
            <person name="Kamihara K."/>
            <person name="Katsuta N."/>
            <person name="Sato K."/>
            <person name="Tanikawa M."/>
            <person name="Yamazaki M."/>
            <person name="Ninomiya K."/>
            <person name="Ishibashi T."/>
            <person name="Yamashita H."/>
            <person name="Murakawa K."/>
            <person name="Fujimori K."/>
            <person name="Tanai H."/>
            <person name="Kimata M."/>
            <person name="Watanabe M."/>
            <person name="Hiraoka S."/>
            <person name="Chiba Y."/>
            <person name="Ishida S."/>
            <person name="Ono Y."/>
            <person name="Takiguchi S."/>
            <person name="Watanabe S."/>
            <person name="Yosida M."/>
            <person name="Hotuta T."/>
            <person name="Kusano J."/>
            <person name="Kanehori K."/>
            <person name="Takahashi-Fujii A."/>
            <person name="Hara H."/>
            <person name="Tanase T.-O."/>
            <person name="Nomura Y."/>
            <person name="Togiya S."/>
            <person name="Komai F."/>
            <person name="Hara R."/>
            <person name="Takeuchi K."/>
            <person name="Arita M."/>
            <person name="Imose N."/>
            <person name="Musashino K."/>
            <person name="Yuuki H."/>
            <person name="Oshima A."/>
            <person name="Sasaki N."/>
            <person name="Aotsuka S."/>
            <person name="Yoshikawa Y."/>
            <person name="Matsunawa H."/>
            <person name="Ichihara T."/>
            <person name="Shiohata N."/>
            <person name="Sano S."/>
            <person name="Moriya S."/>
            <person name="Momiyama H."/>
            <person name="Satoh N."/>
            <person name="Takami S."/>
            <person name="Terashima Y."/>
            <person name="Suzuki O."/>
            <person name="Nakagawa S."/>
            <person name="Senoh A."/>
            <person name="Mizoguchi H."/>
            <person name="Goto Y."/>
            <person name="Shimizu F."/>
            <person name="Wakebe H."/>
            <person name="Hishigaki H."/>
            <person name="Watanabe T."/>
            <person name="Sugiyama A."/>
            <person name="Takemoto M."/>
            <person name="Kawakami B."/>
            <person name="Yamazaki M."/>
            <person name="Watanabe K."/>
            <person name="Kumagai A."/>
            <person name="Itakura S."/>
            <person name="Fukuzumi Y."/>
            <person name="Fujimori Y."/>
            <person name="Komiyama M."/>
            <person name="Tashiro H."/>
            <person name="Tanigami A."/>
            <person name="Fujiwara T."/>
            <person name="Ono T."/>
            <person name="Yamada K."/>
            <person name="Fujii Y."/>
            <person name="Ozaki K."/>
            <person name="Hirao M."/>
            <person name="Ohmori Y."/>
            <person name="Kawabata A."/>
            <person name="Hikiji T."/>
            <person name="Kobatake N."/>
            <person name="Inagaki H."/>
            <person name="Ikema Y."/>
            <person name="Okamoto S."/>
            <person name="Okitani R."/>
            <person name="Kawakami T."/>
            <person name="Noguchi S."/>
            <person name="Itoh T."/>
            <person name="Shigeta K."/>
            <person name="Senba T."/>
            <person name="Matsumura K."/>
            <person name="Nakajima Y."/>
            <person name="Mizuno T."/>
            <person name="Morinaga M."/>
            <person name="Sasaki M."/>
            <person name="Togashi T."/>
            <person name="Oyama M."/>
            <person name="Hata H."/>
            <person name="Watanabe M."/>
            <person name="Komatsu T."/>
            <person name="Mizushima-Sugano J."/>
            <person name="Satoh T."/>
            <person name="Shirai Y."/>
            <person name="Takahashi Y."/>
            <person name="Nakagawa K."/>
            <person name="Okumura K."/>
            <person name="Nagase T."/>
            <person name="Nomura N."/>
            <person name="Kikuchi H."/>
            <person name="Masuho Y."/>
            <person name="Yamashita R."/>
            <person name="Nakai K."/>
            <person name="Yada T."/>
            <person name="Nakamura Y."/>
            <person name="Ohara O."/>
            <person name="Isogai T."/>
            <person name="Sugano S."/>
        </authorList>
    </citation>
    <scope>NUCLEOTIDE SEQUENCE [LARGE SCALE MRNA] (ISOFORMS 1 AND 2)</scope>
    <source>
        <tissue>Corpus callosum</tissue>
    </source>
</reference>
<reference key="2">
    <citation type="journal article" date="2006" name="Nature">
        <title>Human chromosome 11 DNA sequence and analysis including novel gene identification.</title>
        <authorList>
            <person name="Taylor T.D."/>
            <person name="Noguchi H."/>
            <person name="Totoki Y."/>
            <person name="Toyoda A."/>
            <person name="Kuroki Y."/>
            <person name="Dewar K."/>
            <person name="Lloyd C."/>
            <person name="Itoh T."/>
            <person name="Takeda T."/>
            <person name="Kim D.-W."/>
            <person name="She X."/>
            <person name="Barlow K.F."/>
            <person name="Bloom T."/>
            <person name="Bruford E."/>
            <person name="Chang J.L."/>
            <person name="Cuomo C.A."/>
            <person name="Eichler E."/>
            <person name="FitzGerald M.G."/>
            <person name="Jaffe D.B."/>
            <person name="LaButti K."/>
            <person name="Nicol R."/>
            <person name="Park H.-S."/>
            <person name="Seaman C."/>
            <person name="Sougnez C."/>
            <person name="Yang X."/>
            <person name="Zimmer A.R."/>
            <person name="Zody M.C."/>
            <person name="Birren B.W."/>
            <person name="Nusbaum C."/>
            <person name="Fujiyama A."/>
            <person name="Hattori M."/>
            <person name="Rogers J."/>
            <person name="Lander E.S."/>
            <person name="Sakaki Y."/>
        </authorList>
    </citation>
    <scope>NUCLEOTIDE SEQUENCE [LARGE SCALE GENOMIC DNA]</scope>
</reference>
<reference key="3">
    <citation type="journal article" date="2000" name="DNA Res.">
        <title>Prediction of the coding sequences of unidentified human genes. XIX. The complete sequences of 100 new cDNA clones from brain which code for large proteins in vitro.</title>
        <authorList>
            <person name="Nagase T."/>
            <person name="Kikuno R."/>
            <person name="Hattori A."/>
            <person name="Kondo Y."/>
            <person name="Okumura K."/>
            <person name="Ohara O."/>
        </authorList>
    </citation>
    <scope>NUCLEOTIDE SEQUENCE [LARGE SCALE MRNA] OF 260-883 (ISOFORM 1/2)</scope>
    <source>
        <tissue>Brain</tissue>
    </source>
</reference>
<reference key="4">
    <citation type="journal article" date="2008" name="J. Biol. Chem.">
        <title>A novel CCCH-zinc finger protein family regulates proinflammatory activation of macrophages.</title>
        <authorList>
            <person name="Liang J."/>
            <person name="Wang J."/>
            <person name="Azfer A."/>
            <person name="Song W."/>
            <person name="Tromp G."/>
            <person name="Kolattukudy P.E."/>
            <person name="Fu M."/>
        </authorList>
    </citation>
    <scope>IDENTIFICATION</scope>
    <scope>INDUCTION</scope>
</reference>
<reference key="5">
    <citation type="journal article" date="2008" name="Proc. Natl. Acad. Sci. U.S.A.">
        <title>A quantitative atlas of mitotic phosphorylation.</title>
        <authorList>
            <person name="Dephoure N."/>
            <person name="Zhou C."/>
            <person name="Villen J."/>
            <person name="Beausoleil S.A."/>
            <person name="Bakalarski C.E."/>
            <person name="Elledge S.J."/>
            <person name="Gygi S.P."/>
        </authorList>
    </citation>
    <scope>PHOSPHORYLATION [LARGE SCALE ANALYSIS] AT SER-230</scope>
    <scope>IDENTIFICATION BY MASS SPECTROMETRY [LARGE SCALE ANALYSIS]</scope>
    <source>
        <tissue>Cervix carcinoma</tissue>
    </source>
</reference>